<comment type="function">
    <text evidence="2">Nucleotide-sugar transporter that transports UDP-glucose and UDP-galactose. Plays a role in lateral root and root hair development.</text>
</comment>
<comment type="subcellular location">
    <subcellularLocation>
        <location evidence="2">Golgi apparatus membrane</location>
        <topology evidence="1">Multi-pass membrane protein</topology>
    </subcellularLocation>
</comment>
<comment type="alternative products">
    <event type="alternative splicing"/>
    <isoform>
        <id>Q94B65-1</id>
        <name>1</name>
        <sequence type="displayed"/>
    </isoform>
    <text>A number of isoforms are produced. According to EST sequences.</text>
</comment>
<comment type="tissue specificity">
    <text evidence="2">Widely expressed with highest expression in roots.</text>
</comment>
<comment type="disruption phenotype">
    <text evidence="2">Early proliferation of lateral roots as well as distorted root hairs when cultivated at high sucrose concentrations.</text>
</comment>
<comment type="similarity">
    <text evidence="4">Belongs to the TPT transporter family. UGnT (TC 2.A.7.15) subfamily.</text>
</comment>
<comment type="sequence caution" evidence="4">
    <conflict type="erroneous gene model prediction">
        <sequence resource="EMBL-CDS" id="CAA19763"/>
    </conflict>
</comment>
<comment type="sequence caution" evidence="4">
    <conflict type="erroneous gene model prediction">
        <sequence resource="EMBL-CDS" id="CAB79878"/>
    </conflict>
</comment>
<reference key="1">
    <citation type="journal article" date="1999" name="Nature">
        <title>Sequence and analysis of chromosome 4 of the plant Arabidopsis thaliana.</title>
        <authorList>
            <person name="Mayer K.F.X."/>
            <person name="Schueller C."/>
            <person name="Wambutt R."/>
            <person name="Murphy G."/>
            <person name="Volckaert G."/>
            <person name="Pohl T."/>
            <person name="Duesterhoeft A."/>
            <person name="Stiekema W."/>
            <person name="Entian K.-D."/>
            <person name="Terryn N."/>
            <person name="Harris B."/>
            <person name="Ansorge W."/>
            <person name="Brandt P."/>
            <person name="Grivell L.A."/>
            <person name="Rieger M."/>
            <person name="Weichselgartner M."/>
            <person name="de Simone V."/>
            <person name="Obermaier B."/>
            <person name="Mache R."/>
            <person name="Mueller M."/>
            <person name="Kreis M."/>
            <person name="Delseny M."/>
            <person name="Puigdomenech P."/>
            <person name="Watson M."/>
            <person name="Schmidtheini T."/>
            <person name="Reichert B."/>
            <person name="Portetelle D."/>
            <person name="Perez-Alonso M."/>
            <person name="Boutry M."/>
            <person name="Bancroft I."/>
            <person name="Vos P."/>
            <person name="Hoheisel J."/>
            <person name="Zimmermann W."/>
            <person name="Wedler H."/>
            <person name="Ridley P."/>
            <person name="Langham S.-A."/>
            <person name="McCullagh B."/>
            <person name="Bilham L."/>
            <person name="Robben J."/>
            <person name="van der Schueren J."/>
            <person name="Grymonprez B."/>
            <person name="Chuang Y.-J."/>
            <person name="Vandenbussche F."/>
            <person name="Braeken M."/>
            <person name="Weltjens I."/>
            <person name="Voet M."/>
            <person name="Bastiaens I."/>
            <person name="Aert R."/>
            <person name="Defoor E."/>
            <person name="Weitzenegger T."/>
            <person name="Bothe G."/>
            <person name="Ramsperger U."/>
            <person name="Hilbert H."/>
            <person name="Braun M."/>
            <person name="Holzer E."/>
            <person name="Brandt A."/>
            <person name="Peters S."/>
            <person name="van Staveren M."/>
            <person name="Dirkse W."/>
            <person name="Mooijman P."/>
            <person name="Klein Lankhorst R."/>
            <person name="Rose M."/>
            <person name="Hauf J."/>
            <person name="Koetter P."/>
            <person name="Berneiser S."/>
            <person name="Hempel S."/>
            <person name="Feldpausch M."/>
            <person name="Lamberth S."/>
            <person name="Van den Daele H."/>
            <person name="De Keyser A."/>
            <person name="Buysshaert C."/>
            <person name="Gielen J."/>
            <person name="Villarroel R."/>
            <person name="De Clercq R."/>
            <person name="van Montagu M."/>
            <person name="Rogers J."/>
            <person name="Cronin A."/>
            <person name="Quail M.A."/>
            <person name="Bray-Allen S."/>
            <person name="Clark L."/>
            <person name="Doggett J."/>
            <person name="Hall S."/>
            <person name="Kay M."/>
            <person name="Lennard N."/>
            <person name="McLay K."/>
            <person name="Mayes R."/>
            <person name="Pettett A."/>
            <person name="Rajandream M.A."/>
            <person name="Lyne M."/>
            <person name="Benes V."/>
            <person name="Rechmann S."/>
            <person name="Borkova D."/>
            <person name="Bloecker H."/>
            <person name="Scharfe M."/>
            <person name="Grimm M."/>
            <person name="Loehnert T.-H."/>
            <person name="Dose S."/>
            <person name="de Haan M."/>
            <person name="Maarse A.C."/>
            <person name="Schaefer M."/>
            <person name="Mueller-Auer S."/>
            <person name="Gabel C."/>
            <person name="Fuchs M."/>
            <person name="Fartmann B."/>
            <person name="Granderath K."/>
            <person name="Dauner D."/>
            <person name="Herzl A."/>
            <person name="Neumann S."/>
            <person name="Argiriou A."/>
            <person name="Vitale D."/>
            <person name="Liguori R."/>
            <person name="Piravandi E."/>
            <person name="Massenet O."/>
            <person name="Quigley F."/>
            <person name="Clabauld G."/>
            <person name="Muendlein A."/>
            <person name="Felber R."/>
            <person name="Schnabl S."/>
            <person name="Hiller R."/>
            <person name="Schmidt W."/>
            <person name="Lecharny A."/>
            <person name="Aubourg S."/>
            <person name="Chefdor F."/>
            <person name="Cooke R."/>
            <person name="Berger C."/>
            <person name="Monfort A."/>
            <person name="Casacuberta E."/>
            <person name="Gibbons T."/>
            <person name="Weber N."/>
            <person name="Vandenbol M."/>
            <person name="Bargues M."/>
            <person name="Terol J."/>
            <person name="Torres A."/>
            <person name="Perez-Perez A."/>
            <person name="Purnelle B."/>
            <person name="Bent E."/>
            <person name="Johnson S."/>
            <person name="Tacon D."/>
            <person name="Jesse T."/>
            <person name="Heijnen L."/>
            <person name="Schwarz S."/>
            <person name="Scholler P."/>
            <person name="Heber S."/>
            <person name="Francs P."/>
            <person name="Bielke C."/>
            <person name="Frishman D."/>
            <person name="Haase D."/>
            <person name="Lemcke K."/>
            <person name="Mewes H.-W."/>
            <person name="Stocker S."/>
            <person name="Zaccaria P."/>
            <person name="Bevan M."/>
            <person name="Wilson R.K."/>
            <person name="de la Bastide M."/>
            <person name="Habermann K."/>
            <person name="Parnell L."/>
            <person name="Dedhia N."/>
            <person name="Gnoj L."/>
            <person name="Schutz K."/>
            <person name="Huang E."/>
            <person name="Spiegel L."/>
            <person name="Sekhon M."/>
            <person name="Murray J."/>
            <person name="Sheet P."/>
            <person name="Cordes M."/>
            <person name="Abu-Threideh J."/>
            <person name="Stoneking T."/>
            <person name="Kalicki J."/>
            <person name="Graves T."/>
            <person name="Harmon G."/>
            <person name="Edwards J."/>
            <person name="Latreille P."/>
            <person name="Courtney L."/>
            <person name="Cloud J."/>
            <person name="Abbott A."/>
            <person name="Scott K."/>
            <person name="Johnson D."/>
            <person name="Minx P."/>
            <person name="Bentley D."/>
            <person name="Fulton B."/>
            <person name="Miller N."/>
            <person name="Greco T."/>
            <person name="Kemp K."/>
            <person name="Kramer J."/>
            <person name="Fulton L."/>
            <person name="Mardis E."/>
            <person name="Dante M."/>
            <person name="Pepin K."/>
            <person name="Hillier L.W."/>
            <person name="Nelson J."/>
            <person name="Spieth J."/>
            <person name="Ryan E."/>
            <person name="Andrews S."/>
            <person name="Geisel C."/>
            <person name="Layman D."/>
            <person name="Du H."/>
            <person name="Ali J."/>
            <person name="Berghoff A."/>
            <person name="Jones K."/>
            <person name="Drone K."/>
            <person name="Cotton M."/>
            <person name="Joshu C."/>
            <person name="Antonoiu B."/>
            <person name="Zidanic M."/>
            <person name="Strong C."/>
            <person name="Sun H."/>
            <person name="Lamar B."/>
            <person name="Yordan C."/>
            <person name="Ma P."/>
            <person name="Zhong J."/>
            <person name="Preston R."/>
            <person name="Vil D."/>
            <person name="Shekher M."/>
            <person name="Matero A."/>
            <person name="Shah R."/>
            <person name="Swaby I.K."/>
            <person name="O'Shaughnessy A."/>
            <person name="Rodriguez M."/>
            <person name="Hoffman J."/>
            <person name="Till S."/>
            <person name="Granat S."/>
            <person name="Shohdy N."/>
            <person name="Hasegawa A."/>
            <person name="Hameed A."/>
            <person name="Lodhi M."/>
            <person name="Johnson A."/>
            <person name="Chen E."/>
            <person name="Marra M.A."/>
            <person name="Martienssen R."/>
            <person name="McCombie W.R."/>
        </authorList>
    </citation>
    <scope>NUCLEOTIDE SEQUENCE [LARGE SCALE GENOMIC DNA]</scope>
    <source>
        <strain>cv. Columbia</strain>
    </source>
</reference>
<reference key="2">
    <citation type="journal article" date="2017" name="Plant J.">
        <title>Araport11: a complete reannotation of the Arabidopsis thaliana reference genome.</title>
        <authorList>
            <person name="Cheng C.Y."/>
            <person name="Krishnakumar V."/>
            <person name="Chan A.P."/>
            <person name="Thibaud-Nissen F."/>
            <person name="Schobel S."/>
            <person name="Town C.D."/>
        </authorList>
    </citation>
    <scope>GENOME REANNOTATION</scope>
    <source>
        <strain>cv. Columbia</strain>
    </source>
</reference>
<reference key="3">
    <citation type="journal article" date="2003" name="Science">
        <title>Empirical analysis of transcriptional activity in the Arabidopsis genome.</title>
        <authorList>
            <person name="Yamada K."/>
            <person name="Lim J."/>
            <person name="Dale J.M."/>
            <person name="Chen H."/>
            <person name="Shinn P."/>
            <person name="Palm C.J."/>
            <person name="Southwick A.M."/>
            <person name="Wu H.C."/>
            <person name="Kim C.J."/>
            <person name="Nguyen M."/>
            <person name="Pham P.K."/>
            <person name="Cheuk R.F."/>
            <person name="Karlin-Newmann G."/>
            <person name="Liu S.X."/>
            <person name="Lam B."/>
            <person name="Sakano H."/>
            <person name="Wu T."/>
            <person name="Yu G."/>
            <person name="Miranda M."/>
            <person name="Quach H.L."/>
            <person name="Tripp M."/>
            <person name="Chang C.H."/>
            <person name="Lee J.M."/>
            <person name="Toriumi M.J."/>
            <person name="Chan M.M."/>
            <person name="Tang C.C."/>
            <person name="Onodera C.S."/>
            <person name="Deng J.M."/>
            <person name="Akiyama K."/>
            <person name="Ansari Y."/>
            <person name="Arakawa T."/>
            <person name="Banh J."/>
            <person name="Banno F."/>
            <person name="Bowser L."/>
            <person name="Brooks S.Y."/>
            <person name="Carninci P."/>
            <person name="Chao Q."/>
            <person name="Choy N."/>
            <person name="Enju A."/>
            <person name="Goldsmith A.D."/>
            <person name="Gurjal M."/>
            <person name="Hansen N.F."/>
            <person name="Hayashizaki Y."/>
            <person name="Johnson-Hopson C."/>
            <person name="Hsuan V.W."/>
            <person name="Iida K."/>
            <person name="Karnes M."/>
            <person name="Khan S."/>
            <person name="Koesema E."/>
            <person name="Ishida J."/>
            <person name="Jiang P.X."/>
            <person name="Jones T."/>
            <person name="Kawai J."/>
            <person name="Kamiya A."/>
            <person name="Meyers C."/>
            <person name="Nakajima M."/>
            <person name="Narusaka M."/>
            <person name="Seki M."/>
            <person name="Sakurai T."/>
            <person name="Satou M."/>
            <person name="Tamse R."/>
            <person name="Vaysberg M."/>
            <person name="Wallender E.K."/>
            <person name="Wong C."/>
            <person name="Yamamura Y."/>
            <person name="Yuan S."/>
            <person name="Shinozaki K."/>
            <person name="Davis R.W."/>
            <person name="Theologis A."/>
            <person name="Ecker J.R."/>
        </authorList>
    </citation>
    <scope>NUCLEOTIDE SEQUENCE [LARGE SCALE MRNA]</scope>
    <source>
        <strain>cv. Columbia</strain>
    </source>
</reference>
<reference key="4">
    <citation type="journal article" date="2005" name="Glycobiology">
        <title>Molecular cloning of two Arabidopsis UDP-galactose transporters by complementation of a deficient Chinese hamster ovary cell line.</title>
        <authorList>
            <person name="Bakker H."/>
            <person name="Routier F."/>
            <person name="Oelmann S."/>
            <person name="Jordi W."/>
            <person name="Lommen A."/>
            <person name="Gerardy-Schahn R."/>
            <person name="Bosch D."/>
        </authorList>
    </citation>
    <scope>GENE FAMILY</scope>
    <source>
        <strain>cv. Columbia</strain>
    </source>
</reference>
<reference key="5">
    <citation type="journal article" date="2012" name="Mol. Plant">
        <title>Arabidopsis thaliana AtUTr7 encodes a golgi-localized UDP-glucose/UDP-galactose transporter that affects lateral root emergence.</title>
        <authorList>
            <person name="Handford M."/>
            <person name="Rodriguez-Furlan C."/>
            <person name="Marchant L."/>
            <person name="Segura M."/>
            <person name="Gomez D."/>
            <person name="Alvarez-Buylla E."/>
            <person name="Xiong G.Y."/>
            <person name="Pauly M."/>
            <person name="Orellana A."/>
        </authorList>
    </citation>
    <scope>FUNCTION</scope>
    <scope>SUBCELLULAR LOCATION</scope>
    <scope>TISSUE SPECIFICITY</scope>
    <scope>DISRUPTION PHENOTYPE</scope>
    <scope>TOPOLOGY</scope>
</reference>
<reference key="6">
    <citation type="journal article" date="2014" name="Proc. Natl. Acad. Sci. U.S.A.">
        <title>The Golgi localized bifunctional UDP-rhamnose/UDP-galactose transporter family of Arabidopsis.</title>
        <authorList>
            <person name="Rautengarten C."/>
            <person name="Ebert B."/>
            <person name="Moreno I."/>
            <person name="Temple H."/>
            <person name="Herter T."/>
            <person name="Link B."/>
            <person name="Donas-Cofre D."/>
            <person name="Moreno A."/>
            <person name="Saez-Aguayo S."/>
            <person name="Blanco F."/>
            <person name="Mortimer J.C."/>
            <person name="Schultink A."/>
            <person name="Reiter W.D."/>
            <person name="Dupree P."/>
            <person name="Pauly M."/>
            <person name="Heazlewood J.L."/>
            <person name="Scheller H.V."/>
            <person name="Orellana A."/>
        </authorList>
    </citation>
    <scope>GENE FAMILY</scope>
</reference>
<evidence type="ECO:0000255" key="1"/>
<evidence type="ECO:0000269" key="2">
    <source>
    </source>
</evidence>
<evidence type="ECO:0000303" key="3">
    <source>
    </source>
</evidence>
<evidence type="ECO:0000305" key="4"/>
<evidence type="ECO:0000312" key="5">
    <source>
        <dbReference type="Araport" id="AT4G31600"/>
    </source>
</evidence>
<evidence type="ECO:0000312" key="6">
    <source>
        <dbReference type="EMBL" id="CAA19763.1"/>
    </source>
</evidence>
<dbReference type="EMBL" id="AL031004">
    <property type="protein sequence ID" value="CAA19763.1"/>
    <property type="status" value="ALT_SEQ"/>
    <property type="molecule type" value="Genomic_DNA"/>
</dbReference>
<dbReference type="EMBL" id="AL161579">
    <property type="protein sequence ID" value="CAB79878.1"/>
    <property type="status" value="ALT_SEQ"/>
    <property type="molecule type" value="Genomic_DNA"/>
</dbReference>
<dbReference type="EMBL" id="CP002687">
    <property type="protein sequence ID" value="AEE85934.1"/>
    <property type="molecule type" value="Genomic_DNA"/>
</dbReference>
<dbReference type="EMBL" id="AY042818">
    <property type="protein sequence ID" value="AAK68758.1"/>
    <property type="molecule type" value="mRNA"/>
</dbReference>
<dbReference type="EMBL" id="AY064629">
    <property type="protein sequence ID" value="AAL47342.1"/>
    <property type="molecule type" value="mRNA"/>
</dbReference>
<dbReference type="PIR" id="T05110">
    <property type="entry name" value="T05110"/>
</dbReference>
<dbReference type="RefSeq" id="NP_567879.1">
    <molecule id="Q94B65-1"/>
    <property type="nucleotide sequence ID" value="NM_119309.4"/>
</dbReference>
<dbReference type="SMR" id="Q94B65"/>
<dbReference type="FunCoup" id="Q94B65">
    <property type="interactions" value="336"/>
</dbReference>
<dbReference type="IntAct" id="Q94B65">
    <property type="interactions" value="2"/>
</dbReference>
<dbReference type="STRING" id="3702.Q94B65"/>
<dbReference type="PaxDb" id="3702-AT4G31600.1"/>
<dbReference type="ProteomicsDB" id="228666">
    <molecule id="Q94B65-1"/>
</dbReference>
<dbReference type="EnsemblPlants" id="AT4G31600.1">
    <molecule id="Q94B65-1"/>
    <property type="protein sequence ID" value="AT4G31600.1"/>
    <property type="gene ID" value="AT4G31600"/>
</dbReference>
<dbReference type="GeneID" id="829287"/>
<dbReference type="Gramene" id="AT4G31600.1">
    <molecule id="Q94B65-1"/>
    <property type="protein sequence ID" value="AT4G31600.1"/>
    <property type="gene ID" value="AT4G31600"/>
</dbReference>
<dbReference type="KEGG" id="ath:AT4G31600"/>
<dbReference type="Araport" id="AT4G31600"/>
<dbReference type="TAIR" id="AT4G31600">
    <property type="gene designation" value="UTR7"/>
</dbReference>
<dbReference type="eggNOG" id="KOG1444">
    <property type="taxonomic scope" value="Eukaryota"/>
</dbReference>
<dbReference type="HOGENOM" id="CLU_040726_2_1_1"/>
<dbReference type="InParanoid" id="Q94B65"/>
<dbReference type="OMA" id="GWKDPTM"/>
<dbReference type="OrthoDB" id="417037at2759"/>
<dbReference type="PhylomeDB" id="Q94B65"/>
<dbReference type="PRO" id="PR:Q94B65"/>
<dbReference type="Proteomes" id="UP000006548">
    <property type="component" value="Chromosome 4"/>
</dbReference>
<dbReference type="ExpressionAtlas" id="Q94B65">
    <property type="expression patterns" value="baseline and differential"/>
</dbReference>
<dbReference type="GO" id="GO:0005794">
    <property type="term" value="C:Golgi apparatus"/>
    <property type="evidence" value="ECO:0000314"/>
    <property type="project" value="TAIR"/>
</dbReference>
<dbReference type="GO" id="GO:0000139">
    <property type="term" value="C:Golgi membrane"/>
    <property type="evidence" value="ECO:0007669"/>
    <property type="project" value="UniProtKB-SubCell"/>
</dbReference>
<dbReference type="GO" id="GO:0005459">
    <property type="term" value="F:UDP-galactose transmembrane transporter activity"/>
    <property type="evidence" value="ECO:0000314"/>
    <property type="project" value="TAIR"/>
</dbReference>
<dbReference type="GO" id="GO:0005460">
    <property type="term" value="F:UDP-glucose transmembrane transporter activity"/>
    <property type="evidence" value="ECO:0000314"/>
    <property type="project" value="TAIR"/>
</dbReference>
<dbReference type="GO" id="GO:0048527">
    <property type="term" value="P:lateral root development"/>
    <property type="evidence" value="ECO:0000315"/>
    <property type="project" value="TAIR"/>
</dbReference>
<dbReference type="GO" id="GO:0080147">
    <property type="term" value="P:root hair cell development"/>
    <property type="evidence" value="ECO:0000315"/>
    <property type="project" value="TAIR"/>
</dbReference>
<dbReference type="GO" id="GO:0072334">
    <property type="term" value="P:UDP-galactose transmembrane transport"/>
    <property type="evidence" value="ECO:0000314"/>
    <property type="project" value="TAIR"/>
</dbReference>
<dbReference type="GO" id="GO:0015786">
    <property type="term" value="P:UDP-glucose transmembrane transport"/>
    <property type="evidence" value="ECO:0000314"/>
    <property type="project" value="TAIR"/>
</dbReference>
<dbReference type="InterPro" id="IPR004853">
    <property type="entry name" value="Sugar_P_trans_dom"/>
</dbReference>
<dbReference type="InterPro" id="IPR050186">
    <property type="entry name" value="TPT_transporter"/>
</dbReference>
<dbReference type="PANTHER" id="PTHR11132">
    <property type="entry name" value="SOLUTE CARRIER FAMILY 35"/>
    <property type="match status" value="1"/>
</dbReference>
<dbReference type="Pfam" id="PF03151">
    <property type="entry name" value="TPT"/>
    <property type="match status" value="1"/>
</dbReference>
<keyword id="KW-0025">Alternative splicing</keyword>
<keyword id="KW-0333">Golgi apparatus</keyword>
<keyword id="KW-0472">Membrane</keyword>
<keyword id="KW-1185">Reference proteome</keyword>
<keyword id="KW-0762">Sugar transport</keyword>
<keyword id="KW-0812">Transmembrane</keyword>
<keyword id="KW-1133">Transmembrane helix</keyword>
<keyword id="KW-0813">Transport</keyword>
<proteinExistence type="evidence at protein level"/>
<protein>
    <recommendedName>
        <fullName evidence="3">UDP-galactose/UDP-glucose transporter 7</fullName>
        <shortName evidence="3">AtUTr7</shortName>
    </recommendedName>
</protein>
<organism>
    <name type="scientific">Arabidopsis thaliana</name>
    <name type="common">Mouse-ear cress</name>
    <dbReference type="NCBI Taxonomy" id="3702"/>
    <lineage>
        <taxon>Eukaryota</taxon>
        <taxon>Viridiplantae</taxon>
        <taxon>Streptophyta</taxon>
        <taxon>Embryophyta</taxon>
        <taxon>Tracheophyta</taxon>
        <taxon>Spermatophyta</taxon>
        <taxon>Magnoliopsida</taxon>
        <taxon>eudicotyledons</taxon>
        <taxon>Gunneridae</taxon>
        <taxon>Pentapetalae</taxon>
        <taxon>rosids</taxon>
        <taxon>malvids</taxon>
        <taxon>Brassicales</taxon>
        <taxon>Brassicaceae</taxon>
        <taxon>Camelineae</taxon>
        <taxon>Arabidopsis</taxon>
    </lineage>
</organism>
<feature type="chain" id="PRO_0000439529" description="UDP-galactose/UDP-glucose transporter 7">
    <location>
        <begin position="1"/>
        <end position="323"/>
    </location>
</feature>
<feature type="topological domain" description="Cytoplasmic" evidence="3">
    <location>
        <begin position="1"/>
        <end position="10"/>
    </location>
</feature>
<feature type="transmembrane region" description="Helical" evidence="1">
    <location>
        <begin position="11"/>
        <end position="31"/>
    </location>
</feature>
<feature type="topological domain" description="Lumenal" evidence="3">
    <location>
        <begin position="32"/>
        <end position="35"/>
    </location>
</feature>
<feature type="transmembrane region" description="Helical" evidence="1">
    <location>
        <begin position="36"/>
        <end position="58"/>
    </location>
</feature>
<feature type="topological domain" description="Cytoplasmic" evidence="3">
    <location>
        <begin position="59"/>
        <end position="78"/>
    </location>
</feature>
<feature type="transmembrane region" description="Helical" evidence="1">
    <location>
        <begin position="79"/>
        <end position="97"/>
    </location>
</feature>
<feature type="topological domain" description="Lumenal" evidence="3">
    <location>
        <begin position="98"/>
        <end position="101"/>
    </location>
</feature>
<feature type="transmembrane region" description="Helical" evidence="1">
    <location>
        <begin position="102"/>
        <end position="124"/>
    </location>
</feature>
<feature type="topological domain" description="Cytoplasmic" evidence="3">
    <location>
        <begin position="125"/>
        <end position="132"/>
    </location>
</feature>
<feature type="transmembrane region" description="Helical" evidence="1">
    <location>
        <begin position="133"/>
        <end position="153"/>
    </location>
</feature>
<feature type="topological domain" description="Lumenal" evidence="3">
    <location>
        <position position="154"/>
    </location>
</feature>
<feature type="transmembrane region" description="Helical" evidence="1">
    <location>
        <begin position="155"/>
        <end position="175"/>
    </location>
</feature>
<feature type="topological domain" description="Cytoplasmic" evidence="3">
    <location>
        <begin position="176"/>
        <end position="186"/>
    </location>
</feature>
<feature type="transmembrane region" description="Helical" evidence="1">
    <location>
        <begin position="187"/>
        <end position="207"/>
    </location>
</feature>
<feature type="topological domain" description="Lumenal" evidence="3">
    <location>
        <begin position="208"/>
        <end position="226"/>
    </location>
</feature>
<feature type="transmembrane region" description="Helical" evidence="1">
    <location>
        <begin position="227"/>
        <end position="247"/>
    </location>
</feature>
<feature type="topological domain" description="Cytoplasmic" evidence="3">
    <location>
        <begin position="248"/>
        <end position="252"/>
    </location>
</feature>
<feature type="transmembrane region" description="Helical" evidence="1">
    <location>
        <begin position="253"/>
        <end position="275"/>
    </location>
</feature>
<feature type="topological domain" description="Lumenal" evidence="3">
    <location>
        <begin position="276"/>
        <end position="278"/>
    </location>
</feature>
<feature type="transmembrane region" description="Helical" evidence="1">
    <location>
        <begin position="279"/>
        <end position="301"/>
    </location>
</feature>
<feature type="topological domain" description="Cytoplasmic" evidence="3">
    <location>
        <begin position="302"/>
        <end position="323"/>
    </location>
</feature>
<accession>Q94B65</accession>
<accession>Q9SB76</accession>
<name>UTR7_ARATH</name>
<sequence>MEVQAEMEPTSSISLVAAVSYGIASMAMVFINKAVIMQYPHSMTVLTLQQLATSLLIHFGRRMGYTRAKGIDMATAKKLLPVSIFYNANVAFALASLKGVNIPMYIAIKRLTPLAVLISGVLFGKGKPTTQVALSVLLTAAGCVIAALGDFSFDLFGYGLALTSVFFQTMYLVLVEKSGAEDGLSSIEIMFYNSFLSLPFLSILIIVTGEFPNSLSLLLAKCSYLPFLVILILSLVMGIVLNFTMFLCTIVNSALTTTIVGVLKGVGSTTLGFVLLGGVEVHALNVSGLVVNTAGGVWYSYAKYRQKKAKPAKLMSDLEAHKK</sequence>
<gene>
    <name evidence="3" type="primary">UTR7</name>
    <name evidence="5" type="ordered locus">At4g31600</name>
    <name evidence="6" type="ORF">F28M20.210</name>
</gene>